<proteinExistence type="inferred from homology"/>
<protein>
    <recommendedName>
        <fullName>Nickel/cobalt efflux system RcnA</fullName>
    </recommendedName>
</protein>
<reference key="1">
    <citation type="journal article" date="2005" name="Nucleic Acids Res.">
        <title>Genome dynamics and diversity of Shigella species, the etiologic agents of bacillary dysentery.</title>
        <authorList>
            <person name="Yang F."/>
            <person name="Yang J."/>
            <person name="Zhang X."/>
            <person name="Chen L."/>
            <person name="Jiang Y."/>
            <person name="Yan Y."/>
            <person name="Tang X."/>
            <person name="Wang J."/>
            <person name="Xiong Z."/>
            <person name="Dong J."/>
            <person name="Xue Y."/>
            <person name="Zhu Y."/>
            <person name="Xu X."/>
            <person name="Sun L."/>
            <person name="Chen S."/>
            <person name="Nie H."/>
            <person name="Peng J."/>
            <person name="Xu J."/>
            <person name="Wang Y."/>
            <person name="Yuan Z."/>
            <person name="Wen Y."/>
            <person name="Yao Z."/>
            <person name="Shen Y."/>
            <person name="Qiang B."/>
            <person name="Hou Y."/>
            <person name="Yu J."/>
            <person name="Jin Q."/>
        </authorList>
    </citation>
    <scope>NUCLEOTIDE SEQUENCE [LARGE SCALE GENOMIC DNA]</scope>
    <source>
        <strain>Sd197</strain>
    </source>
</reference>
<accession>Q32E98</accession>
<comment type="function">
    <text evidence="1">Efflux system for nickel and cobalt.</text>
</comment>
<comment type="subcellular location">
    <subcellularLocation>
        <location evidence="1">Cell inner membrane</location>
        <topology evidence="1">Multi-pass membrane protein</topology>
    </subcellularLocation>
</comment>
<comment type="induction">
    <text evidence="1">By nickel and cobalt. Transcriptionally repressed by RcnR (By similarity).</text>
</comment>
<comment type="similarity">
    <text evidence="4">Belongs to the NiCoT transporter (TC 2.A.52) family. RcnA subfamily.</text>
</comment>
<evidence type="ECO:0000250" key="1"/>
<evidence type="ECO:0000255" key="2"/>
<evidence type="ECO:0000256" key="3">
    <source>
        <dbReference type="SAM" id="MobiDB-lite"/>
    </source>
</evidence>
<evidence type="ECO:0000305" key="4"/>
<feature type="chain" id="PRO_0000333789" description="Nickel/cobalt efflux system RcnA">
    <location>
        <begin position="1"/>
        <end position="285"/>
    </location>
</feature>
<feature type="topological domain" description="Periplasmic" evidence="2">
    <location>
        <begin position="1"/>
        <end position="10"/>
    </location>
</feature>
<feature type="transmembrane region" description="Helical" evidence="2">
    <location>
        <begin position="11"/>
        <end position="31"/>
    </location>
</feature>
<feature type="topological domain" description="Cytoplasmic" evidence="2">
    <location>
        <begin position="32"/>
        <end position="56"/>
    </location>
</feature>
<feature type="transmembrane region" description="Helical" evidence="2">
    <location>
        <begin position="57"/>
        <end position="77"/>
    </location>
</feature>
<feature type="topological domain" description="Periplasmic" evidence="2">
    <location>
        <begin position="78"/>
        <end position="86"/>
    </location>
</feature>
<feature type="transmembrane region" description="Helical" evidence="2">
    <location>
        <begin position="87"/>
        <end position="107"/>
    </location>
</feature>
<feature type="topological domain" description="Cytoplasmic" evidence="2">
    <location>
        <begin position="108"/>
        <end position="185"/>
    </location>
</feature>
<feature type="transmembrane region" description="Helical" evidence="2">
    <location>
        <begin position="186"/>
        <end position="206"/>
    </location>
</feature>
<feature type="topological domain" description="Periplasmic" evidence="2">
    <location>
        <begin position="207"/>
        <end position="220"/>
    </location>
</feature>
<feature type="transmembrane region" description="Helical" evidence="2">
    <location>
        <begin position="221"/>
        <end position="241"/>
    </location>
</feature>
<feature type="topological domain" description="Cytoplasmic" evidence="2">
    <location>
        <begin position="242"/>
        <end position="262"/>
    </location>
</feature>
<feature type="transmembrane region" description="Helical" evidence="2">
    <location>
        <begin position="263"/>
        <end position="283"/>
    </location>
</feature>
<feature type="topological domain" description="Periplasmic" evidence="2">
    <location>
        <begin position="284"/>
        <end position="285"/>
    </location>
</feature>
<feature type="region of interest" description="Disordered" evidence="3">
    <location>
        <begin position="127"/>
        <end position="164"/>
    </location>
</feature>
<feature type="compositionally biased region" description="Basic and acidic residues" evidence="3">
    <location>
        <begin position="135"/>
        <end position="146"/>
    </location>
</feature>
<feature type="compositionally biased region" description="Basic and acidic residues" evidence="3">
    <location>
        <begin position="153"/>
        <end position="164"/>
    </location>
</feature>
<sequence>MTEFTTLLQQGSAWFFIPSAILLGALHGLEPGHSKTMMAAFIIAIKGTIKQAVMLGLAATISHTAVVWLIAFGGMVISKRFTAQSAEPWLQLISAVIIISTAFWMFWRTWRGERNWLENMHEHEHDHEHHHHDHEHHQDHDHDHDHEHHHHHEHGDNEEYQDAHARAHANDIKRHFDGREVTNWQILLFGLTGGLIPCPAAITVLLICIQLKALTLGATLVVSFSIGLALTLVTVGVGAAISVQQVAKRWSGFNTLAKRAPYFSSLLIGLVGVYMGVHGFMGIMR</sequence>
<name>RCNA_SHIDS</name>
<keyword id="KW-0997">Cell inner membrane</keyword>
<keyword id="KW-1003">Cell membrane</keyword>
<keyword id="KW-0170">Cobalt</keyword>
<keyword id="KW-0171">Cobalt transport</keyword>
<keyword id="KW-0406">Ion transport</keyword>
<keyword id="KW-0472">Membrane</keyword>
<keyword id="KW-0533">Nickel</keyword>
<keyword id="KW-0921">Nickel transport</keyword>
<keyword id="KW-1185">Reference proteome</keyword>
<keyword id="KW-0812">Transmembrane</keyword>
<keyword id="KW-1133">Transmembrane helix</keyword>
<keyword id="KW-0813">Transport</keyword>
<organism>
    <name type="scientific">Shigella dysenteriae serotype 1 (strain Sd197)</name>
    <dbReference type="NCBI Taxonomy" id="300267"/>
    <lineage>
        <taxon>Bacteria</taxon>
        <taxon>Pseudomonadati</taxon>
        <taxon>Pseudomonadota</taxon>
        <taxon>Gammaproteobacteria</taxon>
        <taxon>Enterobacterales</taxon>
        <taxon>Enterobacteriaceae</taxon>
        <taxon>Shigella</taxon>
    </lineage>
</organism>
<dbReference type="EMBL" id="CP000034">
    <property type="protein sequence ID" value="ABB62357.1"/>
    <property type="molecule type" value="Genomic_DNA"/>
</dbReference>
<dbReference type="RefSeq" id="WP_000134651.1">
    <property type="nucleotide sequence ID" value="NC_007606.1"/>
</dbReference>
<dbReference type="RefSeq" id="YP_403848.1">
    <property type="nucleotide sequence ID" value="NC_007606.1"/>
</dbReference>
<dbReference type="STRING" id="300267.SDY_2280"/>
<dbReference type="EnsemblBacteria" id="ABB62357">
    <property type="protein sequence ID" value="ABB62357"/>
    <property type="gene ID" value="SDY_2280"/>
</dbReference>
<dbReference type="KEGG" id="sdy:SDY_2280"/>
<dbReference type="PATRIC" id="fig|300267.13.peg.2753"/>
<dbReference type="HOGENOM" id="CLU_058605_2_0_6"/>
<dbReference type="Proteomes" id="UP000002716">
    <property type="component" value="Chromosome"/>
</dbReference>
<dbReference type="GO" id="GO:0005886">
    <property type="term" value="C:plasma membrane"/>
    <property type="evidence" value="ECO:0007669"/>
    <property type="project" value="UniProtKB-SubCell"/>
</dbReference>
<dbReference type="GO" id="GO:0046583">
    <property type="term" value="F:monoatomic cation efflux transmembrane transporter activity"/>
    <property type="evidence" value="ECO:0007669"/>
    <property type="project" value="TreeGrafter"/>
</dbReference>
<dbReference type="GO" id="GO:0015099">
    <property type="term" value="F:nickel cation transmembrane transporter activity"/>
    <property type="evidence" value="ECO:0007669"/>
    <property type="project" value="InterPro"/>
</dbReference>
<dbReference type="GO" id="GO:0006824">
    <property type="term" value="P:cobalt ion transport"/>
    <property type="evidence" value="ECO:0007669"/>
    <property type="project" value="UniProtKB-KW"/>
</dbReference>
<dbReference type="GO" id="GO:0032025">
    <property type="term" value="P:response to cobalt ion"/>
    <property type="evidence" value="ECO:0007669"/>
    <property type="project" value="TreeGrafter"/>
</dbReference>
<dbReference type="GO" id="GO:0010045">
    <property type="term" value="P:response to nickel cation"/>
    <property type="evidence" value="ECO:0007669"/>
    <property type="project" value="TreeGrafter"/>
</dbReference>
<dbReference type="InterPro" id="IPR011541">
    <property type="entry name" value="Ni/Co_transpt_high_affinity"/>
</dbReference>
<dbReference type="InterPro" id="IPR051224">
    <property type="entry name" value="NiCoT_RcnA"/>
</dbReference>
<dbReference type="NCBIfam" id="NF007454">
    <property type="entry name" value="PRK10019.1"/>
    <property type="match status" value="1"/>
</dbReference>
<dbReference type="PANTHER" id="PTHR40659">
    <property type="entry name" value="NICKEL/COBALT EFFLUX SYSTEM RCNA"/>
    <property type="match status" value="1"/>
</dbReference>
<dbReference type="PANTHER" id="PTHR40659:SF1">
    <property type="entry name" value="NICKEL_COBALT EFFLUX SYSTEM RCNA"/>
    <property type="match status" value="1"/>
</dbReference>
<dbReference type="Pfam" id="PF03824">
    <property type="entry name" value="NicO"/>
    <property type="match status" value="1"/>
</dbReference>
<gene>
    <name type="primary">rcnA</name>
    <name type="ordered locus">SDY_2280</name>
</gene>